<reference key="1">
    <citation type="journal article" date="2002" name="Proc. Natl. Acad. Sci. U.S.A.">
        <title>The genome sequence of Bifidobacterium longum reflects its adaptation to the human gastrointestinal tract.</title>
        <authorList>
            <person name="Schell M.A."/>
            <person name="Karmirantzou M."/>
            <person name="Snel B."/>
            <person name="Vilanova D."/>
            <person name="Berger B."/>
            <person name="Pessi G."/>
            <person name="Zwahlen M.-C."/>
            <person name="Desiere F."/>
            <person name="Bork P."/>
            <person name="Delley M."/>
            <person name="Pridmore R.D."/>
            <person name="Arigoni F."/>
        </authorList>
    </citation>
    <scope>NUCLEOTIDE SEQUENCE [LARGE SCALE GENOMIC DNA]</scope>
    <source>
        <strain>NCC 2705</strain>
    </source>
</reference>
<sequence length="251" mass="26974">MSGHSKWATTKHKKAAIDAKRGKLFAKLIKNIEIAARLGGGDPDGNPSLYDAIYKAKKASMPADNIARAVKRGAGAEDGAANYEDIVYEGYAPAGVGLIIECLTDNRNRAAAEVRSTLTKGNGSLATSGSVSFNFERKGQIVVPSEGVDFDKLFETAAEAGAEDVTDDGEVFTVVTGPSDLFTVRKALQEAGFDYDSADQVMQPKNEVELSLEDARKVSKLIDNLDDLDDVQNIYSNWTASDEVMAQLDEE</sequence>
<feature type="chain" id="PRO_0000175768" description="Probable transcriptional regulatory protein BL0726">
    <location>
        <begin position="1"/>
        <end position="251"/>
    </location>
</feature>
<evidence type="ECO:0000255" key="1">
    <source>
        <dbReference type="HAMAP-Rule" id="MF_00693"/>
    </source>
</evidence>
<proteinExistence type="inferred from homology"/>
<accession>Q8G6C0</accession>
<gene>
    <name type="ordered locus">BL0726</name>
</gene>
<keyword id="KW-0963">Cytoplasm</keyword>
<keyword id="KW-0238">DNA-binding</keyword>
<keyword id="KW-1185">Reference proteome</keyword>
<keyword id="KW-0804">Transcription</keyword>
<keyword id="KW-0805">Transcription regulation</keyword>
<protein>
    <recommendedName>
        <fullName evidence="1">Probable transcriptional regulatory protein BL0726</fullName>
    </recommendedName>
</protein>
<dbReference type="EMBL" id="AE014295">
    <property type="protein sequence ID" value="AAN24543.1"/>
    <property type="molecule type" value="Genomic_DNA"/>
</dbReference>
<dbReference type="RefSeq" id="NP_695907.1">
    <property type="nucleotide sequence ID" value="NC_004307.2"/>
</dbReference>
<dbReference type="RefSeq" id="WP_007052855.1">
    <property type="nucleotide sequence ID" value="NC_004307.2"/>
</dbReference>
<dbReference type="SMR" id="Q8G6C0"/>
<dbReference type="STRING" id="206672.BL0726"/>
<dbReference type="EnsemblBacteria" id="AAN24543">
    <property type="protein sequence ID" value="AAN24543"/>
    <property type="gene ID" value="BL0726"/>
</dbReference>
<dbReference type="KEGG" id="blo:BL0726"/>
<dbReference type="PATRIC" id="fig|206672.9.peg.423"/>
<dbReference type="HOGENOM" id="CLU_062974_2_2_11"/>
<dbReference type="OrthoDB" id="9781053at2"/>
<dbReference type="PhylomeDB" id="Q8G6C0"/>
<dbReference type="Proteomes" id="UP000000439">
    <property type="component" value="Chromosome"/>
</dbReference>
<dbReference type="GO" id="GO:0005829">
    <property type="term" value="C:cytosol"/>
    <property type="evidence" value="ECO:0007669"/>
    <property type="project" value="TreeGrafter"/>
</dbReference>
<dbReference type="GO" id="GO:0003677">
    <property type="term" value="F:DNA binding"/>
    <property type="evidence" value="ECO:0007669"/>
    <property type="project" value="UniProtKB-UniRule"/>
</dbReference>
<dbReference type="GO" id="GO:0006355">
    <property type="term" value="P:regulation of DNA-templated transcription"/>
    <property type="evidence" value="ECO:0007669"/>
    <property type="project" value="UniProtKB-UniRule"/>
</dbReference>
<dbReference type="FunFam" id="1.10.10.200:FF:000002">
    <property type="entry name" value="Probable transcriptional regulatory protein CLM62_37755"/>
    <property type="match status" value="1"/>
</dbReference>
<dbReference type="Gene3D" id="1.10.10.200">
    <property type="match status" value="1"/>
</dbReference>
<dbReference type="Gene3D" id="3.30.70.980">
    <property type="match status" value="2"/>
</dbReference>
<dbReference type="HAMAP" id="MF_00693">
    <property type="entry name" value="Transcrip_reg_TACO1"/>
    <property type="match status" value="1"/>
</dbReference>
<dbReference type="InterPro" id="IPR017856">
    <property type="entry name" value="Integrase-like_N"/>
</dbReference>
<dbReference type="InterPro" id="IPR048300">
    <property type="entry name" value="TACO1_YebC-like_2nd/3rd_dom"/>
</dbReference>
<dbReference type="InterPro" id="IPR049083">
    <property type="entry name" value="TACO1_YebC_N"/>
</dbReference>
<dbReference type="InterPro" id="IPR002876">
    <property type="entry name" value="Transcrip_reg_TACO1-like"/>
</dbReference>
<dbReference type="InterPro" id="IPR026564">
    <property type="entry name" value="Transcrip_reg_TACO1-like_dom3"/>
</dbReference>
<dbReference type="InterPro" id="IPR029072">
    <property type="entry name" value="YebC-like"/>
</dbReference>
<dbReference type="NCBIfam" id="NF001030">
    <property type="entry name" value="PRK00110.1"/>
    <property type="match status" value="1"/>
</dbReference>
<dbReference type="NCBIfam" id="NF009044">
    <property type="entry name" value="PRK12378.1"/>
    <property type="match status" value="1"/>
</dbReference>
<dbReference type="NCBIfam" id="TIGR01033">
    <property type="entry name" value="YebC/PmpR family DNA-binding transcriptional regulator"/>
    <property type="match status" value="1"/>
</dbReference>
<dbReference type="PANTHER" id="PTHR12532:SF6">
    <property type="entry name" value="TRANSCRIPTIONAL REGULATORY PROTEIN YEBC-RELATED"/>
    <property type="match status" value="1"/>
</dbReference>
<dbReference type="PANTHER" id="PTHR12532">
    <property type="entry name" value="TRANSLATIONAL ACTIVATOR OF CYTOCHROME C OXIDASE 1"/>
    <property type="match status" value="1"/>
</dbReference>
<dbReference type="Pfam" id="PF20772">
    <property type="entry name" value="TACO1_YebC_N"/>
    <property type="match status" value="1"/>
</dbReference>
<dbReference type="Pfam" id="PF01709">
    <property type="entry name" value="Transcrip_reg"/>
    <property type="match status" value="1"/>
</dbReference>
<dbReference type="SUPFAM" id="SSF75625">
    <property type="entry name" value="YebC-like"/>
    <property type="match status" value="1"/>
</dbReference>
<comment type="subcellular location">
    <subcellularLocation>
        <location evidence="1">Cytoplasm</location>
    </subcellularLocation>
</comment>
<comment type="similarity">
    <text evidence="1">Belongs to the TACO1 family.</text>
</comment>
<name>Y726_BIFLO</name>
<organism>
    <name type="scientific">Bifidobacterium longum (strain NCC 2705)</name>
    <dbReference type="NCBI Taxonomy" id="206672"/>
    <lineage>
        <taxon>Bacteria</taxon>
        <taxon>Bacillati</taxon>
        <taxon>Actinomycetota</taxon>
        <taxon>Actinomycetes</taxon>
        <taxon>Bifidobacteriales</taxon>
        <taxon>Bifidobacteriaceae</taxon>
        <taxon>Bifidobacterium</taxon>
    </lineage>
</organism>